<proteinExistence type="inferred from homology"/>
<gene>
    <name type="primary">trbE</name>
</gene>
<reference key="1">
    <citation type="journal article" date="1996" name="J. Bacteriol.">
        <title>The conjugal transfer system of Agrobacterium tumefaciens octopine-type Ti plasmids is closely related to the transfer system of an IncP plasmid and distantly related to Ti plasmid vir genes.</title>
        <authorList>
            <person name="Alt-Morbe J."/>
            <person name="Stryker J.L."/>
            <person name="Fuqua C."/>
            <person name="Li P.L."/>
            <person name="Farrand S.K."/>
            <person name="Winans S.C."/>
        </authorList>
    </citation>
    <scope>NUCLEOTIDE SEQUENCE [GENOMIC DNA]</scope>
</reference>
<dbReference type="EMBL" id="AF242881">
    <property type="protein sequence ID" value="AAB95097.1"/>
    <property type="molecule type" value="Genomic_DNA"/>
</dbReference>
<dbReference type="RefSeq" id="NP_059757.1">
    <property type="nucleotide sequence ID" value="NC_002377.1"/>
</dbReference>
<dbReference type="RefSeq" id="WP_010892445.1">
    <property type="nucleotide sequence ID" value="NC_002377.1"/>
</dbReference>
<dbReference type="SMR" id="P54910"/>
<dbReference type="eggNOG" id="COG3451">
    <property type="taxonomic scope" value="Bacteria"/>
</dbReference>
<dbReference type="GO" id="GO:0005524">
    <property type="term" value="F:ATP binding"/>
    <property type="evidence" value="ECO:0007669"/>
    <property type="project" value="UniProtKB-KW"/>
</dbReference>
<dbReference type="GO" id="GO:0016887">
    <property type="term" value="F:ATP hydrolysis activity"/>
    <property type="evidence" value="ECO:0007669"/>
    <property type="project" value="InterPro"/>
</dbReference>
<dbReference type="CDD" id="cd01127">
    <property type="entry name" value="TrwB_TraG_TraD_VirD4"/>
    <property type="match status" value="1"/>
</dbReference>
<dbReference type="Gene3D" id="3.40.50.300">
    <property type="entry name" value="P-loop containing nucleotide triphosphate hydrolases"/>
    <property type="match status" value="2"/>
</dbReference>
<dbReference type="InterPro" id="IPR003593">
    <property type="entry name" value="AAA+_ATPase"/>
</dbReference>
<dbReference type="InterPro" id="IPR004346">
    <property type="entry name" value="CagE_TrbE_VirB"/>
</dbReference>
<dbReference type="InterPro" id="IPR018145">
    <property type="entry name" value="CagE_TrbE_VirB_cntrl_dom"/>
</dbReference>
<dbReference type="InterPro" id="IPR027417">
    <property type="entry name" value="P-loop_NTPase"/>
</dbReference>
<dbReference type="InterPro" id="IPR051162">
    <property type="entry name" value="T4SS_component"/>
</dbReference>
<dbReference type="NCBIfam" id="NF010404">
    <property type="entry name" value="PRK13830.1"/>
    <property type="match status" value="1"/>
</dbReference>
<dbReference type="NCBIfam" id="TIGR00929">
    <property type="entry name" value="VirB4_CagE"/>
    <property type="match status" value="1"/>
</dbReference>
<dbReference type="PANTHER" id="PTHR30121:SF12">
    <property type="entry name" value="TYPE IV SECRETION SYSTEM PROTEIN CAGE"/>
    <property type="match status" value="1"/>
</dbReference>
<dbReference type="PANTHER" id="PTHR30121">
    <property type="entry name" value="UNCHARACTERIZED PROTEIN YJGR-RELATED"/>
    <property type="match status" value="1"/>
</dbReference>
<dbReference type="Pfam" id="PF03135">
    <property type="entry name" value="CagE_TrbE_VirB"/>
    <property type="match status" value="1"/>
</dbReference>
<dbReference type="SMART" id="SM00382">
    <property type="entry name" value="AAA"/>
    <property type="match status" value="1"/>
</dbReference>
<dbReference type="SUPFAM" id="SSF52540">
    <property type="entry name" value="P-loop containing nucleoside triphosphate hydrolases"/>
    <property type="match status" value="1"/>
</dbReference>
<keyword id="KW-0067">ATP-binding</keyword>
<keyword id="KW-0184">Conjugation</keyword>
<keyword id="KW-0547">Nucleotide-binding</keyword>
<keyword id="KW-0614">Plasmid</keyword>
<keyword id="KW-0732">Signal</keyword>
<sequence length="820" mass="91536">MVALKSFRHSGPSFADLVPYAGLVDNGVILLKDGSLMAGWYFSGPDSESSTDAERNDVSRQINAILSRLGSGWMIQVEAVRVPTADYPKESDCHFPDLVTRAIDAERRAHFQKERGHFESRHALILTWRPPEPRRSGLTRYIYSDTASRSATYADKALESFSTSIREVEQYLANVVSIRRMMTRETSERGCFRVARYDELFQFIRFCVTGQNHPVRLPEIPMYLDWLVTAELQHGLTPLIENRFLGVVAIDGLPAESWPGILNALDLMPLTYRWSSRFVFLDAEEARANLERTRKKWQQKVRPFFDQLFQTQSRSLDQDAMMMVAETEDAIAEASSQLRAYGYYTPVIVLFEEDQARLQEKCEAVRRLIQAEGFGARIETLNATDAFLSSLPGVSYANIREPLINTRNLADLIPLNSVWSGSAVAPCPFYPPASPPLMQVASGSTPFRLNLHVDDVGHTLIFGPTGSGKSTLLSLIAAQFRRYSGAQIFAFDKGGSMLSLTLGIDGDHYQIGGDATEGGDGKALSFCPLADLTTDGDRAFAAEWIEMLVALQGVTITPDYRNAISRQVGLMAESRGRSLSDFVSGVQMREIKDALHHYTVDGPMGQLLDAEEDGLALGSFQCFEIEELMNMGERNLVPVLTYLFRRIEKRLTGAPSLIILDEAWLMLGHPVFRDKIREWLKVLRKANCAVVLATQSISDAERSGIIDVLKESCPTKICLPNGAAREPGTREFYERIGFNERQIEIVATAIPKRDYYVVSPEGRRLFDMALGPVALSFVGASGKEDLKRIRALHSEHGAAWPLQWLQQRGIAHADTLFPAD</sequence>
<organism>
    <name type="scientific">Rhizobium radiobacter</name>
    <name type="common">Agrobacterium tumefaciens</name>
    <name type="synonym">Agrobacterium radiobacter</name>
    <dbReference type="NCBI Taxonomy" id="358"/>
    <lineage>
        <taxon>Bacteria</taxon>
        <taxon>Pseudomonadati</taxon>
        <taxon>Pseudomonadota</taxon>
        <taxon>Alphaproteobacteria</taxon>
        <taxon>Hyphomicrobiales</taxon>
        <taxon>Rhizobiaceae</taxon>
        <taxon>Rhizobium/Agrobacterium group</taxon>
        <taxon>Agrobacterium</taxon>
        <taxon>Agrobacterium tumefaciens complex</taxon>
    </lineage>
</organism>
<protein>
    <recommendedName>
        <fullName>Conjugal transfer protein TrbE</fullName>
    </recommendedName>
</protein>
<feature type="signal peptide" evidence="1">
    <location>
        <begin position="1"/>
        <end position="15"/>
    </location>
</feature>
<feature type="chain" id="PRO_0000022581" description="Conjugal transfer protein TrbE">
    <location>
        <begin position="16"/>
        <end position="820"/>
    </location>
</feature>
<feature type="binding site" evidence="1">
    <location>
        <begin position="463"/>
        <end position="470"/>
    </location>
    <ligand>
        <name>ATP</name>
        <dbReference type="ChEBI" id="CHEBI:30616"/>
    </ligand>
</feature>
<geneLocation type="plasmid">
    <name>pTiA6NC</name>
</geneLocation>
<accession>P54910</accession>
<comment type="similarity">
    <text evidence="2">Belongs to the TrbE/VirB4 family.</text>
</comment>
<evidence type="ECO:0000255" key="1"/>
<evidence type="ECO:0000305" key="2"/>
<name>TRBE_RHIRD</name>